<keyword id="KW-0028">Amino-acid biosynthesis</keyword>
<keyword id="KW-0057">Aromatic amino acid biosynthesis</keyword>
<keyword id="KW-0067">ATP-binding</keyword>
<keyword id="KW-0963">Cytoplasm</keyword>
<keyword id="KW-0418">Kinase</keyword>
<keyword id="KW-0460">Magnesium</keyword>
<keyword id="KW-0479">Metal-binding</keyword>
<keyword id="KW-0547">Nucleotide-binding</keyword>
<keyword id="KW-0808">Transferase</keyword>
<feature type="chain" id="PRO_1000140131" description="Shikimate kinase 2">
    <location>
        <begin position="1"/>
        <end position="174"/>
    </location>
</feature>
<feature type="region of interest" description="LID domain">
    <location>
        <begin position="112"/>
        <end position="126"/>
    </location>
</feature>
<feature type="binding site" evidence="1">
    <location>
        <begin position="12"/>
        <end position="17"/>
    </location>
    <ligand>
        <name>ATP</name>
        <dbReference type="ChEBI" id="CHEBI:30616"/>
    </ligand>
</feature>
<feature type="binding site" evidence="1">
    <location>
        <position position="16"/>
    </location>
    <ligand>
        <name>Mg(2+)</name>
        <dbReference type="ChEBI" id="CHEBI:18420"/>
    </ligand>
</feature>
<feature type="binding site" evidence="1">
    <location>
        <position position="32"/>
    </location>
    <ligand>
        <name>Mg(2+)</name>
        <dbReference type="ChEBI" id="CHEBI:18420"/>
    </ligand>
</feature>
<feature type="binding site" evidence="1">
    <location>
        <position position="34"/>
    </location>
    <ligand>
        <name>substrate</name>
    </ligand>
</feature>
<feature type="binding site" evidence="1">
    <location>
        <position position="58"/>
    </location>
    <ligand>
        <name>substrate</name>
    </ligand>
</feature>
<feature type="binding site" evidence="1">
    <location>
        <position position="79"/>
    </location>
    <ligand>
        <name>substrate</name>
    </ligand>
</feature>
<feature type="binding site" evidence="1">
    <location>
        <position position="120"/>
    </location>
    <ligand>
        <name>ATP</name>
        <dbReference type="ChEBI" id="CHEBI:30616"/>
    </ligand>
</feature>
<feature type="binding site" evidence="1">
    <location>
        <position position="139"/>
    </location>
    <ligand>
        <name>substrate</name>
    </ligand>
</feature>
<gene>
    <name evidence="1" type="primary">aroL</name>
    <name type="ordered locus">ECDH10B_0345</name>
</gene>
<organism>
    <name type="scientific">Escherichia coli (strain K12 / DH10B)</name>
    <dbReference type="NCBI Taxonomy" id="316385"/>
    <lineage>
        <taxon>Bacteria</taxon>
        <taxon>Pseudomonadati</taxon>
        <taxon>Pseudomonadota</taxon>
        <taxon>Gammaproteobacteria</taxon>
        <taxon>Enterobacterales</taxon>
        <taxon>Enterobacteriaceae</taxon>
        <taxon>Escherichia</taxon>
    </lineage>
</organism>
<sequence length="174" mass="19151">MTQPLFLIGPRGCGKTTVGMALADSLNRRFVDTDQWLQSQLNMTVAEIVEREEWAGFRARETAALEAVTAPSTVIATGGGIILTEFNRHFMQNNGIVVYLCAPVSVLVNRLQAAPEEDLRPTLTGKPLSEEVQEVLEERDALYREVAHIIIDATNEPSQVISEIRSALAQTINC</sequence>
<dbReference type="EC" id="2.7.1.71" evidence="1"/>
<dbReference type="EMBL" id="CP000948">
    <property type="protein sequence ID" value="ACB01517.1"/>
    <property type="molecule type" value="Genomic_DNA"/>
</dbReference>
<dbReference type="RefSeq" id="WP_000193393.1">
    <property type="nucleotide sequence ID" value="NC_010473.1"/>
</dbReference>
<dbReference type="SMR" id="B1XEX7"/>
<dbReference type="GeneID" id="93777073"/>
<dbReference type="KEGG" id="ecd:ECDH10B_0345"/>
<dbReference type="HOGENOM" id="CLU_057607_4_3_6"/>
<dbReference type="UniPathway" id="UPA00053">
    <property type="reaction ID" value="UER00088"/>
</dbReference>
<dbReference type="GO" id="GO:0005829">
    <property type="term" value="C:cytosol"/>
    <property type="evidence" value="ECO:0007669"/>
    <property type="project" value="TreeGrafter"/>
</dbReference>
<dbReference type="GO" id="GO:0005524">
    <property type="term" value="F:ATP binding"/>
    <property type="evidence" value="ECO:0007669"/>
    <property type="project" value="UniProtKB-UniRule"/>
</dbReference>
<dbReference type="GO" id="GO:0000287">
    <property type="term" value="F:magnesium ion binding"/>
    <property type="evidence" value="ECO:0007669"/>
    <property type="project" value="UniProtKB-UniRule"/>
</dbReference>
<dbReference type="GO" id="GO:0004765">
    <property type="term" value="F:shikimate kinase activity"/>
    <property type="evidence" value="ECO:0007669"/>
    <property type="project" value="UniProtKB-UniRule"/>
</dbReference>
<dbReference type="GO" id="GO:0008652">
    <property type="term" value="P:amino acid biosynthetic process"/>
    <property type="evidence" value="ECO:0007669"/>
    <property type="project" value="UniProtKB-KW"/>
</dbReference>
<dbReference type="GO" id="GO:0009073">
    <property type="term" value="P:aromatic amino acid family biosynthetic process"/>
    <property type="evidence" value="ECO:0007669"/>
    <property type="project" value="UniProtKB-KW"/>
</dbReference>
<dbReference type="GO" id="GO:0009423">
    <property type="term" value="P:chorismate biosynthetic process"/>
    <property type="evidence" value="ECO:0007669"/>
    <property type="project" value="UniProtKB-UniRule"/>
</dbReference>
<dbReference type="CDD" id="cd00464">
    <property type="entry name" value="SK"/>
    <property type="match status" value="1"/>
</dbReference>
<dbReference type="FunFam" id="3.40.50.300:FF:000408">
    <property type="entry name" value="Shikimate kinase 2"/>
    <property type="match status" value="1"/>
</dbReference>
<dbReference type="Gene3D" id="3.40.50.300">
    <property type="entry name" value="P-loop containing nucleotide triphosphate hydrolases"/>
    <property type="match status" value="1"/>
</dbReference>
<dbReference type="HAMAP" id="MF_00109">
    <property type="entry name" value="Shikimate_kinase"/>
    <property type="match status" value="1"/>
</dbReference>
<dbReference type="HAMAP" id="MF_01269">
    <property type="entry name" value="Shikimate_kinase_2"/>
    <property type="match status" value="1"/>
</dbReference>
<dbReference type="InterPro" id="IPR027417">
    <property type="entry name" value="P-loop_NTPase"/>
</dbReference>
<dbReference type="InterPro" id="IPR031322">
    <property type="entry name" value="Shikimate/glucono_kinase"/>
</dbReference>
<dbReference type="InterPro" id="IPR000623">
    <property type="entry name" value="Shikimate_kinase/TSH1"/>
</dbReference>
<dbReference type="InterPro" id="IPR027544">
    <property type="entry name" value="Shikimate_kinase_2"/>
</dbReference>
<dbReference type="InterPro" id="IPR023000">
    <property type="entry name" value="Shikimate_kinase_CS"/>
</dbReference>
<dbReference type="NCBIfam" id="NF002988">
    <property type="entry name" value="PRK03731.1"/>
    <property type="match status" value="1"/>
</dbReference>
<dbReference type="PANTHER" id="PTHR21087">
    <property type="entry name" value="SHIKIMATE KINASE"/>
    <property type="match status" value="1"/>
</dbReference>
<dbReference type="PANTHER" id="PTHR21087:SF21">
    <property type="entry name" value="SHIKIMATE KINASE 2"/>
    <property type="match status" value="1"/>
</dbReference>
<dbReference type="Pfam" id="PF01202">
    <property type="entry name" value="SKI"/>
    <property type="match status" value="1"/>
</dbReference>
<dbReference type="PRINTS" id="PR01100">
    <property type="entry name" value="SHIKIMTKNASE"/>
</dbReference>
<dbReference type="SUPFAM" id="SSF52540">
    <property type="entry name" value="P-loop containing nucleoside triphosphate hydrolases"/>
    <property type="match status" value="1"/>
</dbReference>
<dbReference type="PROSITE" id="PS01128">
    <property type="entry name" value="SHIKIMATE_KINASE"/>
    <property type="match status" value="1"/>
</dbReference>
<comment type="function">
    <text evidence="1">Catalyzes the specific phosphorylation of the 3-hydroxyl group of shikimic acid using ATP as a cosubstrate.</text>
</comment>
<comment type="catalytic activity">
    <reaction evidence="1">
        <text>shikimate + ATP = 3-phosphoshikimate + ADP + H(+)</text>
        <dbReference type="Rhea" id="RHEA:13121"/>
        <dbReference type="ChEBI" id="CHEBI:15378"/>
        <dbReference type="ChEBI" id="CHEBI:30616"/>
        <dbReference type="ChEBI" id="CHEBI:36208"/>
        <dbReference type="ChEBI" id="CHEBI:145989"/>
        <dbReference type="ChEBI" id="CHEBI:456216"/>
        <dbReference type="EC" id="2.7.1.71"/>
    </reaction>
</comment>
<comment type="cofactor">
    <cofactor evidence="1">
        <name>Mg(2+)</name>
        <dbReference type="ChEBI" id="CHEBI:18420"/>
    </cofactor>
    <text evidence="1">Binds 1 Mg(2+) ion per subunit.</text>
</comment>
<comment type="pathway">
    <text evidence="1">Metabolic intermediate biosynthesis; chorismate biosynthesis; chorismate from D-erythrose 4-phosphate and phosphoenolpyruvate: step 5/7.</text>
</comment>
<comment type="subunit">
    <text evidence="1">Monomer.</text>
</comment>
<comment type="subcellular location">
    <subcellularLocation>
        <location evidence="1">Cytoplasm</location>
    </subcellularLocation>
</comment>
<comment type="domain">
    <text evidence="1">The LID domain closes over the active site upon ATP binding.</text>
</comment>
<comment type="similarity">
    <text evidence="1">Belongs to the shikimate kinase family. AroL subfamily.</text>
</comment>
<proteinExistence type="inferred from homology"/>
<protein>
    <recommendedName>
        <fullName evidence="1">Shikimate kinase 2</fullName>
        <shortName evidence="1">SK 2</shortName>
        <ecNumber evidence="1">2.7.1.71</ecNumber>
    </recommendedName>
</protein>
<evidence type="ECO:0000255" key="1">
    <source>
        <dbReference type="HAMAP-Rule" id="MF_01269"/>
    </source>
</evidence>
<reference key="1">
    <citation type="journal article" date="2008" name="J. Bacteriol.">
        <title>The complete genome sequence of Escherichia coli DH10B: insights into the biology of a laboratory workhorse.</title>
        <authorList>
            <person name="Durfee T."/>
            <person name="Nelson R."/>
            <person name="Baldwin S."/>
            <person name="Plunkett G. III"/>
            <person name="Burland V."/>
            <person name="Mau B."/>
            <person name="Petrosino J.F."/>
            <person name="Qin X."/>
            <person name="Muzny D.M."/>
            <person name="Ayele M."/>
            <person name="Gibbs R.A."/>
            <person name="Csorgo B."/>
            <person name="Posfai G."/>
            <person name="Weinstock G.M."/>
            <person name="Blattner F.R."/>
        </authorList>
    </citation>
    <scope>NUCLEOTIDE SEQUENCE [LARGE SCALE GENOMIC DNA]</scope>
    <source>
        <strain>K12 / DH10B</strain>
    </source>
</reference>
<name>AROL_ECODH</name>
<accession>B1XEX7</accession>